<name>PNP_BRUSU</name>
<protein>
    <recommendedName>
        <fullName evidence="1">Polyribonucleotide nucleotidyltransferase</fullName>
        <ecNumber evidence="1">2.7.7.8</ecNumber>
    </recommendedName>
    <alternativeName>
        <fullName evidence="1">Polynucleotide phosphorylase</fullName>
        <shortName evidence="1">PNPase</shortName>
    </alternativeName>
</protein>
<keyword id="KW-0963">Cytoplasm</keyword>
<keyword id="KW-0460">Magnesium</keyword>
<keyword id="KW-0479">Metal-binding</keyword>
<keyword id="KW-0548">Nucleotidyltransferase</keyword>
<keyword id="KW-0694">RNA-binding</keyword>
<keyword id="KW-0808">Transferase</keyword>
<sequence length="714" mass="77756">MFNTHKVEIEWGGRPLTLETGKIARQADGAVLATYGETAVLATVVSAKEPKPGQDFFPLTVNYQEKTYAAGKIPGGYFKREGRPSENETLVSRLIDRPIRPLFVDGYKNDTQVVITVLQHDLENNPDILSMVAASAALTISGVPFMGPISGARVGYIDGEYVLNPNIDEMPESKLDLVVAGTSEAVLMVESEAQELPEDVMLGAVMFGHKSFQPVIDAIIKLAEVAAKEPRDFQPEDLSELEAKVLAVVENDLREAYKITEKQARYAAVDAAKAKAKEHFFPEGVEETEMSAEQFATIFKHLQAKIVRWNILDTGNRIDGRDLSTVRPIVSEVGILPRTHGSALFTRGETQAIVVATLGTGEDEQMIDALTGTYKESFMLHYNFPPYSVGETGRMGSPGRREIGHGKLAWRAIHPMLPAAEQFPYTIRAVSEITESNGSSSMATVCGTSLALMDAGVPIVRPVAGIAMGLIKEGERFAVLSDILGDEDYLGDMDFKVAGTEFGITSLQMDIKIDGITEEIMKVALEQAKGGRVHILGEMAKAISSSRAELGEFAPRIEVMNIPTDKIRDVIGSGGKVIREIVEKTGAKINIEDDGTVKIASSNGKEIEAAKKWIHSIVAEPEVGEIYEGTVVKTADFGAFVNFFGPRDGLVHISQLAADRVAKTTDVVKEGQKVWVKLMGFDERGKVRLSMKVVDQETGKEIVAEKKKEEVDAE</sequence>
<organism>
    <name type="scientific">Brucella suis biovar 1 (strain 1330)</name>
    <dbReference type="NCBI Taxonomy" id="204722"/>
    <lineage>
        <taxon>Bacteria</taxon>
        <taxon>Pseudomonadati</taxon>
        <taxon>Pseudomonadota</taxon>
        <taxon>Alphaproteobacteria</taxon>
        <taxon>Hyphomicrobiales</taxon>
        <taxon>Brucellaceae</taxon>
        <taxon>Brucella/Ochrobactrum group</taxon>
        <taxon>Brucella</taxon>
    </lineage>
</organism>
<feature type="chain" id="PRO_0000329549" description="Polyribonucleotide nucleotidyltransferase">
    <location>
        <begin position="1"/>
        <end position="714"/>
    </location>
</feature>
<feature type="domain" description="KH" evidence="1">
    <location>
        <begin position="555"/>
        <end position="614"/>
    </location>
</feature>
<feature type="domain" description="S1 motif" evidence="1">
    <location>
        <begin position="624"/>
        <end position="692"/>
    </location>
</feature>
<feature type="binding site" evidence="1">
    <location>
        <position position="488"/>
    </location>
    <ligand>
        <name>Mg(2+)</name>
        <dbReference type="ChEBI" id="CHEBI:18420"/>
    </ligand>
</feature>
<feature type="binding site" evidence="1">
    <location>
        <position position="494"/>
    </location>
    <ligand>
        <name>Mg(2+)</name>
        <dbReference type="ChEBI" id="CHEBI:18420"/>
    </ligand>
</feature>
<comment type="function">
    <text evidence="1">Involved in mRNA degradation. Catalyzes the phosphorolysis of single-stranded polyribonucleotides processively in the 3'- to 5'-direction.</text>
</comment>
<comment type="catalytic activity">
    <reaction evidence="1">
        <text>RNA(n+1) + phosphate = RNA(n) + a ribonucleoside 5'-diphosphate</text>
        <dbReference type="Rhea" id="RHEA:22096"/>
        <dbReference type="Rhea" id="RHEA-COMP:14527"/>
        <dbReference type="Rhea" id="RHEA-COMP:17342"/>
        <dbReference type="ChEBI" id="CHEBI:43474"/>
        <dbReference type="ChEBI" id="CHEBI:57930"/>
        <dbReference type="ChEBI" id="CHEBI:140395"/>
        <dbReference type="EC" id="2.7.7.8"/>
    </reaction>
</comment>
<comment type="cofactor">
    <cofactor evidence="1">
        <name>Mg(2+)</name>
        <dbReference type="ChEBI" id="CHEBI:18420"/>
    </cofactor>
</comment>
<comment type="subcellular location">
    <subcellularLocation>
        <location evidence="1">Cytoplasm</location>
    </subcellularLocation>
</comment>
<comment type="similarity">
    <text evidence="1">Belongs to the polyribonucleotide nucleotidyltransferase family.</text>
</comment>
<gene>
    <name evidence="1" type="primary">pnp</name>
    <name type="ordered locus">BR2169</name>
    <name type="ordered locus">BS1330_I2163</name>
</gene>
<evidence type="ECO:0000255" key="1">
    <source>
        <dbReference type="HAMAP-Rule" id="MF_01595"/>
    </source>
</evidence>
<proteinExistence type="inferred from homology"/>
<accession>Q8FXS9</accession>
<accession>G0K9J5</accession>
<reference key="1">
    <citation type="journal article" date="2002" name="Proc. Natl. Acad. Sci. U.S.A.">
        <title>The Brucella suis genome reveals fundamental similarities between animal and plant pathogens and symbionts.</title>
        <authorList>
            <person name="Paulsen I.T."/>
            <person name="Seshadri R."/>
            <person name="Nelson K.E."/>
            <person name="Eisen J.A."/>
            <person name="Heidelberg J.F."/>
            <person name="Read T.D."/>
            <person name="Dodson R.J."/>
            <person name="Umayam L.A."/>
            <person name="Brinkac L.M."/>
            <person name="Beanan M.J."/>
            <person name="Daugherty S.C."/>
            <person name="DeBoy R.T."/>
            <person name="Durkin A.S."/>
            <person name="Kolonay J.F."/>
            <person name="Madupu R."/>
            <person name="Nelson W.C."/>
            <person name="Ayodeji B."/>
            <person name="Kraul M."/>
            <person name="Shetty J."/>
            <person name="Malek J.A."/>
            <person name="Van Aken S.E."/>
            <person name="Riedmuller S."/>
            <person name="Tettelin H."/>
            <person name="Gill S.R."/>
            <person name="White O."/>
            <person name="Salzberg S.L."/>
            <person name="Hoover D.L."/>
            <person name="Lindler L.E."/>
            <person name="Halling S.M."/>
            <person name="Boyle S.M."/>
            <person name="Fraser C.M."/>
        </authorList>
    </citation>
    <scope>NUCLEOTIDE SEQUENCE [LARGE SCALE GENOMIC DNA]</scope>
    <source>
        <strain>1330</strain>
    </source>
</reference>
<reference key="2">
    <citation type="journal article" date="2011" name="J. Bacteriol.">
        <title>Revised genome sequence of Brucella suis 1330.</title>
        <authorList>
            <person name="Tae H."/>
            <person name="Shallom S."/>
            <person name="Settlage R."/>
            <person name="Preston D."/>
            <person name="Adams L.G."/>
            <person name="Garner H.R."/>
        </authorList>
    </citation>
    <scope>NUCLEOTIDE SEQUENCE [LARGE SCALE GENOMIC DNA]</scope>
    <source>
        <strain>1330</strain>
    </source>
</reference>
<dbReference type="EC" id="2.7.7.8" evidence="1"/>
<dbReference type="EMBL" id="AE014291">
    <property type="protein sequence ID" value="AAN31058.1"/>
    <property type="molecule type" value="Genomic_DNA"/>
</dbReference>
<dbReference type="EMBL" id="CP002997">
    <property type="protein sequence ID" value="AEM19476.1"/>
    <property type="molecule type" value="Genomic_DNA"/>
</dbReference>
<dbReference type="RefSeq" id="WP_006191095.1">
    <property type="nucleotide sequence ID" value="NZ_KN046804.1"/>
</dbReference>
<dbReference type="SMR" id="Q8FXS9"/>
<dbReference type="GeneID" id="45053089"/>
<dbReference type="KEGG" id="bms:BR2169"/>
<dbReference type="KEGG" id="bsi:BS1330_I2163"/>
<dbReference type="PATRIC" id="fig|204722.22.peg.1847"/>
<dbReference type="HOGENOM" id="CLU_004217_2_2_5"/>
<dbReference type="PhylomeDB" id="Q8FXS9"/>
<dbReference type="Proteomes" id="UP000007104">
    <property type="component" value="Chromosome I"/>
</dbReference>
<dbReference type="GO" id="GO:0005829">
    <property type="term" value="C:cytosol"/>
    <property type="evidence" value="ECO:0007669"/>
    <property type="project" value="TreeGrafter"/>
</dbReference>
<dbReference type="GO" id="GO:0000175">
    <property type="term" value="F:3'-5'-RNA exonuclease activity"/>
    <property type="evidence" value="ECO:0007669"/>
    <property type="project" value="TreeGrafter"/>
</dbReference>
<dbReference type="GO" id="GO:0000287">
    <property type="term" value="F:magnesium ion binding"/>
    <property type="evidence" value="ECO:0007669"/>
    <property type="project" value="UniProtKB-UniRule"/>
</dbReference>
<dbReference type="GO" id="GO:0004654">
    <property type="term" value="F:polyribonucleotide nucleotidyltransferase activity"/>
    <property type="evidence" value="ECO:0007669"/>
    <property type="project" value="UniProtKB-UniRule"/>
</dbReference>
<dbReference type="GO" id="GO:0003723">
    <property type="term" value="F:RNA binding"/>
    <property type="evidence" value="ECO:0007669"/>
    <property type="project" value="UniProtKB-UniRule"/>
</dbReference>
<dbReference type="GO" id="GO:0006402">
    <property type="term" value="P:mRNA catabolic process"/>
    <property type="evidence" value="ECO:0007669"/>
    <property type="project" value="UniProtKB-UniRule"/>
</dbReference>
<dbReference type="GO" id="GO:0006396">
    <property type="term" value="P:RNA processing"/>
    <property type="evidence" value="ECO:0007669"/>
    <property type="project" value="InterPro"/>
</dbReference>
<dbReference type="CDD" id="cd02393">
    <property type="entry name" value="KH-I_PNPase"/>
    <property type="match status" value="1"/>
</dbReference>
<dbReference type="CDD" id="cd11363">
    <property type="entry name" value="RNase_PH_PNPase_1"/>
    <property type="match status" value="1"/>
</dbReference>
<dbReference type="CDD" id="cd11364">
    <property type="entry name" value="RNase_PH_PNPase_2"/>
    <property type="match status" value="1"/>
</dbReference>
<dbReference type="CDD" id="cd04472">
    <property type="entry name" value="S1_PNPase"/>
    <property type="match status" value="1"/>
</dbReference>
<dbReference type="FunFam" id="2.40.50.140:FF:000107">
    <property type="entry name" value="Polyribonucleotide nucleotidyltransferase"/>
    <property type="match status" value="1"/>
</dbReference>
<dbReference type="FunFam" id="3.30.1370.10:FF:000001">
    <property type="entry name" value="Polyribonucleotide nucleotidyltransferase"/>
    <property type="match status" value="1"/>
</dbReference>
<dbReference type="FunFam" id="3.30.230.70:FF:000001">
    <property type="entry name" value="Polyribonucleotide nucleotidyltransferase"/>
    <property type="match status" value="1"/>
</dbReference>
<dbReference type="FunFam" id="3.30.230.70:FF:000002">
    <property type="entry name" value="Polyribonucleotide nucleotidyltransferase"/>
    <property type="match status" value="1"/>
</dbReference>
<dbReference type="Gene3D" id="3.30.230.70">
    <property type="entry name" value="GHMP Kinase, N-terminal domain"/>
    <property type="match status" value="2"/>
</dbReference>
<dbReference type="Gene3D" id="3.30.1370.10">
    <property type="entry name" value="K Homology domain, type 1"/>
    <property type="match status" value="1"/>
</dbReference>
<dbReference type="Gene3D" id="2.40.50.140">
    <property type="entry name" value="Nucleic acid-binding proteins"/>
    <property type="match status" value="1"/>
</dbReference>
<dbReference type="HAMAP" id="MF_01595">
    <property type="entry name" value="PNPase"/>
    <property type="match status" value="1"/>
</dbReference>
<dbReference type="InterPro" id="IPR001247">
    <property type="entry name" value="ExoRNase_PH_dom1"/>
</dbReference>
<dbReference type="InterPro" id="IPR015847">
    <property type="entry name" value="ExoRNase_PH_dom2"/>
</dbReference>
<dbReference type="InterPro" id="IPR036345">
    <property type="entry name" value="ExoRNase_PH_dom2_sf"/>
</dbReference>
<dbReference type="InterPro" id="IPR004087">
    <property type="entry name" value="KH_dom"/>
</dbReference>
<dbReference type="InterPro" id="IPR004088">
    <property type="entry name" value="KH_dom_type_1"/>
</dbReference>
<dbReference type="InterPro" id="IPR036612">
    <property type="entry name" value="KH_dom_type_1_sf"/>
</dbReference>
<dbReference type="InterPro" id="IPR012340">
    <property type="entry name" value="NA-bd_OB-fold"/>
</dbReference>
<dbReference type="InterPro" id="IPR012162">
    <property type="entry name" value="PNPase"/>
</dbReference>
<dbReference type="InterPro" id="IPR027408">
    <property type="entry name" value="PNPase/RNase_PH_dom_sf"/>
</dbReference>
<dbReference type="InterPro" id="IPR015848">
    <property type="entry name" value="PNPase_PH_RNA-bd_bac/org-type"/>
</dbReference>
<dbReference type="InterPro" id="IPR020568">
    <property type="entry name" value="Ribosomal_Su5_D2-typ_SF"/>
</dbReference>
<dbReference type="InterPro" id="IPR003029">
    <property type="entry name" value="S1_domain"/>
</dbReference>
<dbReference type="NCBIfam" id="TIGR03591">
    <property type="entry name" value="polynuc_phos"/>
    <property type="match status" value="1"/>
</dbReference>
<dbReference type="NCBIfam" id="NF008805">
    <property type="entry name" value="PRK11824.1"/>
    <property type="match status" value="1"/>
</dbReference>
<dbReference type="PANTHER" id="PTHR11252">
    <property type="entry name" value="POLYRIBONUCLEOTIDE NUCLEOTIDYLTRANSFERASE"/>
    <property type="match status" value="1"/>
</dbReference>
<dbReference type="PANTHER" id="PTHR11252:SF0">
    <property type="entry name" value="POLYRIBONUCLEOTIDE NUCLEOTIDYLTRANSFERASE 1, MITOCHONDRIAL"/>
    <property type="match status" value="1"/>
</dbReference>
<dbReference type="Pfam" id="PF00013">
    <property type="entry name" value="KH_1"/>
    <property type="match status" value="1"/>
</dbReference>
<dbReference type="Pfam" id="PF03726">
    <property type="entry name" value="PNPase"/>
    <property type="match status" value="1"/>
</dbReference>
<dbReference type="Pfam" id="PF01138">
    <property type="entry name" value="RNase_PH"/>
    <property type="match status" value="2"/>
</dbReference>
<dbReference type="Pfam" id="PF03725">
    <property type="entry name" value="RNase_PH_C"/>
    <property type="match status" value="2"/>
</dbReference>
<dbReference type="Pfam" id="PF00575">
    <property type="entry name" value="S1"/>
    <property type="match status" value="1"/>
</dbReference>
<dbReference type="PIRSF" id="PIRSF005499">
    <property type="entry name" value="PNPase"/>
    <property type="match status" value="1"/>
</dbReference>
<dbReference type="SMART" id="SM00322">
    <property type="entry name" value="KH"/>
    <property type="match status" value="1"/>
</dbReference>
<dbReference type="SMART" id="SM00316">
    <property type="entry name" value="S1"/>
    <property type="match status" value="1"/>
</dbReference>
<dbReference type="SUPFAM" id="SSF54791">
    <property type="entry name" value="Eukaryotic type KH-domain (KH-domain type I)"/>
    <property type="match status" value="1"/>
</dbReference>
<dbReference type="SUPFAM" id="SSF50249">
    <property type="entry name" value="Nucleic acid-binding proteins"/>
    <property type="match status" value="1"/>
</dbReference>
<dbReference type="SUPFAM" id="SSF55666">
    <property type="entry name" value="Ribonuclease PH domain 2-like"/>
    <property type="match status" value="2"/>
</dbReference>
<dbReference type="SUPFAM" id="SSF54211">
    <property type="entry name" value="Ribosomal protein S5 domain 2-like"/>
    <property type="match status" value="2"/>
</dbReference>
<dbReference type="PROSITE" id="PS50084">
    <property type="entry name" value="KH_TYPE_1"/>
    <property type="match status" value="1"/>
</dbReference>
<dbReference type="PROSITE" id="PS50126">
    <property type="entry name" value="S1"/>
    <property type="match status" value="1"/>
</dbReference>